<keyword id="KW-0274">FAD</keyword>
<keyword id="KW-0285">Flavoprotein</keyword>
<keyword id="KW-0521">NADP</keyword>
<keyword id="KW-0560">Oxidoreductase</keyword>
<dbReference type="EC" id="1.18.1.2" evidence="1"/>
<dbReference type="EMBL" id="CP000083">
    <property type="protein sequence ID" value="AAZ24462.1"/>
    <property type="molecule type" value="Genomic_DNA"/>
</dbReference>
<dbReference type="RefSeq" id="WP_011042747.1">
    <property type="nucleotide sequence ID" value="NC_003910.7"/>
</dbReference>
<dbReference type="SMR" id="Q483W3"/>
<dbReference type="STRING" id="167879.CPS_1923"/>
<dbReference type="KEGG" id="cps:CPS_1923"/>
<dbReference type="HOGENOM" id="CLU_031864_5_5_6"/>
<dbReference type="Proteomes" id="UP000000547">
    <property type="component" value="Chromosome"/>
</dbReference>
<dbReference type="GO" id="GO:0004324">
    <property type="term" value="F:ferredoxin-NADP+ reductase activity"/>
    <property type="evidence" value="ECO:0007669"/>
    <property type="project" value="UniProtKB-UniRule"/>
</dbReference>
<dbReference type="GO" id="GO:0050660">
    <property type="term" value="F:flavin adenine dinucleotide binding"/>
    <property type="evidence" value="ECO:0007669"/>
    <property type="project" value="UniProtKB-UniRule"/>
</dbReference>
<dbReference type="GO" id="GO:0050661">
    <property type="term" value="F:NADP binding"/>
    <property type="evidence" value="ECO:0007669"/>
    <property type="project" value="UniProtKB-UniRule"/>
</dbReference>
<dbReference type="Gene3D" id="3.50.50.60">
    <property type="entry name" value="FAD/NAD(P)-binding domain"/>
    <property type="match status" value="2"/>
</dbReference>
<dbReference type="HAMAP" id="MF_01685">
    <property type="entry name" value="FENR2"/>
    <property type="match status" value="1"/>
</dbReference>
<dbReference type="InterPro" id="IPR036188">
    <property type="entry name" value="FAD/NAD-bd_sf"/>
</dbReference>
<dbReference type="InterPro" id="IPR023753">
    <property type="entry name" value="FAD/NAD-binding_dom"/>
</dbReference>
<dbReference type="InterPro" id="IPR022890">
    <property type="entry name" value="Fd--NADP_Rdtase_type_2"/>
</dbReference>
<dbReference type="InterPro" id="IPR050097">
    <property type="entry name" value="Ferredoxin-NADP_redctase_2"/>
</dbReference>
<dbReference type="PANTHER" id="PTHR48105">
    <property type="entry name" value="THIOREDOXIN REDUCTASE 1-RELATED-RELATED"/>
    <property type="match status" value="1"/>
</dbReference>
<dbReference type="Pfam" id="PF07992">
    <property type="entry name" value="Pyr_redox_2"/>
    <property type="match status" value="1"/>
</dbReference>
<dbReference type="PRINTS" id="PR00368">
    <property type="entry name" value="FADPNR"/>
</dbReference>
<dbReference type="PRINTS" id="PR00469">
    <property type="entry name" value="PNDRDTASEII"/>
</dbReference>
<dbReference type="SUPFAM" id="SSF51905">
    <property type="entry name" value="FAD/NAD(P)-binding domain"/>
    <property type="match status" value="1"/>
</dbReference>
<sequence length="349" mass="38698">MKTLTTDVAIIGAGPVGLFQIFELGLQGLSTVVIDSLPEIGGQCSELYPDKPIYDIPALPNAKASEVIDNLWQQAAIFDPTFLLAERVEHIEKVSEHSFIVTTHKQTQIHCRAVVIAAGNGAFSPVKLKLPLIDKFEDTQLFYRISNIEHFRDKNVVVLGGGDSALDWSLTLQKTAKSVLLIHRSSNFKAAKSSVNKMYELCEQLKMQFLCGQVSSFQEKENKLTGLTITSKDGVNRRVELDELVVLFGMSPKLGPIDNWQLEMHQHQIKVDTQSFQTSVTGIYAVGDINYYPGKRKLILSGFHEAALAAFSIAETVLEKDRIPTLYTTTSPVVHQRLGVEHSLEAMLS</sequence>
<reference key="1">
    <citation type="journal article" date="2005" name="Proc. Natl. Acad. Sci. U.S.A.">
        <title>The psychrophilic lifestyle as revealed by the genome sequence of Colwellia psychrerythraea 34H through genomic and proteomic analyses.</title>
        <authorList>
            <person name="Methe B.A."/>
            <person name="Nelson K.E."/>
            <person name="Deming J.W."/>
            <person name="Momen B."/>
            <person name="Melamud E."/>
            <person name="Zhang X."/>
            <person name="Moult J."/>
            <person name="Madupu R."/>
            <person name="Nelson W.C."/>
            <person name="Dodson R.J."/>
            <person name="Brinkac L.M."/>
            <person name="Daugherty S.C."/>
            <person name="Durkin A.S."/>
            <person name="DeBoy R.T."/>
            <person name="Kolonay J.F."/>
            <person name="Sullivan S.A."/>
            <person name="Zhou L."/>
            <person name="Davidsen T.M."/>
            <person name="Wu M."/>
            <person name="Huston A.L."/>
            <person name="Lewis M."/>
            <person name="Weaver B."/>
            <person name="Weidman J.F."/>
            <person name="Khouri H."/>
            <person name="Utterback T.R."/>
            <person name="Feldblyum T.V."/>
            <person name="Fraser C.M."/>
        </authorList>
    </citation>
    <scope>NUCLEOTIDE SEQUENCE [LARGE SCALE GENOMIC DNA]</scope>
    <source>
        <strain>34H / ATCC BAA-681</strain>
    </source>
</reference>
<organism>
    <name type="scientific">Colwellia psychrerythraea (strain 34H / ATCC BAA-681)</name>
    <name type="common">Vibrio psychroerythus</name>
    <dbReference type="NCBI Taxonomy" id="167879"/>
    <lineage>
        <taxon>Bacteria</taxon>
        <taxon>Pseudomonadati</taxon>
        <taxon>Pseudomonadota</taxon>
        <taxon>Gammaproteobacteria</taxon>
        <taxon>Alteromonadales</taxon>
        <taxon>Colwelliaceae</taxon>
        <taxon>Colwellia</taxon>
    </lineage>
</organism>
<name>FENR_COLP3</name>
<gene>
    <name type="ordered locus">CPS_1923</name>
</gene>
<proteinExistence type="inferred from homology"/>
<feature type="chain" id="PRO_0000364824" description="Ferredoxin--NADP reductase">
    <location>
        <begin position="1"/>
        <end position="349"/>
    </location>
</feature>
<feature type="binding site" evidence="1">
    <location>
        <position position="35"/>
    </location>
    <ligand>
        <name>FAD</name>
        <dbReference type="ChEBI" id="CHEBI:57692"/>
    </ligand>
</feature>
<feature type="binding site" evidence="1">
    <location>
        <position position="43"/>
    </location>
    <ligand>
        <name>FAD</name>
        <dbReference type="ChEBI" id="CHEBI:57692"/>
    </ligand>
</feature>
<feature type="binding site" evidence="1">
    <location>
        <position position="48"/>
    </location>
    <ligand>
        <name>FAD</name>
        <dbReference type="ChEBI" id="CHEBI:57692"/>
    </ligand>
</feature>
<feature type="binding site" evidence="1">
    <location>
        <position position="88"/>
    </location>
    <ligand>
        <name>FAD</name>
        <dbReference type="ChEBI" id="CHEBI:57692"/>
    </ligand>
</feature>
<feature type="binding site" evidence="1">
    <location>
        <position position="123"/>
    </location>
    <ligand>
        <name>FAD</name>
        <dbReference type="ChEBI" id="CHEBI:57692"/>
    </ligand>
</feature>
<feature type="binding site" evidence="1">
    <location>
        <position position="288"/>
    </location>
    <ligand>
        <name>FAD</name>
        <dbReference type="ChEBI" id="CHEBI:57692"/>
    </ligand>
</feature>
<feature type="binding site" evidence="1">
    <location>
        <position position="329"/>
    </location>
    <ligand>
        <name>FAD</name>
        <dbReference type="ChEBI" id="CHEBI:57692"/>
    </ligand>
</feature>
<comment type="catalytic activity">
    <reaction evidence="1">
        <text>2 reduced [2Fe-2S]-[ferredoxin] + NADP(+) + H(+) = 2 oxidized [2Fe-2S]-[ferredoxin] + NADPH</text>
        <dbReference type="Rhea" id="RHEA:20125"/>
        <dbReference type="Rhea" id="RHEA-COMP:10000"/>
        <dbReference type="Rhea" id="RHEA-COMP:10001"/>
        <dbReference type="ChEBI" id="CHEBI:15378"/>
        <dbReference type="ChEBI" id="CHEBI:33737"/>
        <dbReference type="ChEBI" id="CHEBI:33738"/>
        <dbReference type="ChEBI" id="CHEBI:57783"/>
        <dbReference type="ChEBI" id="CHEBI:58349"/>
        <dbReference type="EC" id="1.18.1.2"/>
    </reaction>
</comment>
<comment type="cofactor">
    <cofactor evidence="1">
        <name>FAD</name>
        <dbReference type="ChEBI" id="CHEBI:57692"/>
    </cofactor>
    <text evidence="1">Binds 1 FAD per subunit.</text>
</comment>
<comment type="subunit">
    <text evidence="1">Homodimer.</text>
</comment>
<comment type="similarity">
    <text evidence="1">Belongs to the ferredoxin--NADP reductase type 2 family.</text>
</comment>
<protein>
    <recommendedName>
        <fullName evidence="1">Ferredoxin--NADP reductase</fullName>
        <shortName evidence="1">FNR</shortName>
        <shortName evidence="1">Fd-NADP(+) reductase</shortName>
        <ecNumber evidence="1">1.18.1.2</ecNumber>
    </recommendedName>
</protein>
<accession>Q483W3</accession>
<evidence type="ECO:0000255" key="1">
    <source>
        <dbReference type="HAMAP-Rule" id="MF_01685"/>
    </source>
</evidence>